<comment type="function">
    <text evidence="1">Binds to 23S rRNA. Forms part of two intersubunit bridges in the 70S ribosome.</text>
</comment>
<comment type="subunit">
    <text evidence="1">Part of the 50S ribosomal subunit. Forms a cluster with proteins L3 and L19. In the 70S ribosome, L14 and L19 interact and together make contacts with the 16S rRNA in bridges B5 and B8.</text>
</comment>
<comment type="similarity">
    <text evidence="1">Belongs to the universal ribosomal protein uL14 family.</text>
</comment>
<keyword id="KW-0687">Ribonucleoprotein</keyword>
<keyword id="KW-0689">Ribosomal protein</keyword>
<keyword id="KW-0694">RNA-binding</keyword>
<keyword id="KW-0699">rRNA-binding</keyword>
<proteinExistence type="inferred from homology"/>
<dbReference type="EMBL" id="CP000901">
    <property type="protein sequence ID" value="ABX88523.1"/>
    <property type="molecule type" value="Genomic_DNA"/>
</dbReference>
<dbReference type="RefSeq" id="WP_002213325.1">
    <property type="nucleotide sequence ID" value="NZ_CP009935.1"/>
</dbReference>
<dbReference type="SMR" id="A9R905"/>
<dbReference type="GeneID" id="97454241"/>
<dbReference type="KEGG" id="ypg:YpAngola_A0593"/>
<dbReference type="PATRIC" id="fig|349746.12.peg.1543"/>
<dbReference type="GO" id="GO:0022625">
    <property type="term" value="C:cytosolic large ribosomal subunit"/>
    <property type="evidence" value="ECO:0007669"/>
    <property type="project" value="TreeGrafter"/>
</dbReference>
<dbReference type="GO" id="GO:0070180">
    <property type="term" value="F:large ribosomal subunit rRNA binding"/>
    <property type="evidence" value="ECO:0007669"/>
    <property type="project" value="TreeGrafter"/>
</dbReference>
<dbReference type="GO" id="GO:0003735">
    <property type="term" value="F:structural constituent of ribosome"/>
    <property type="evidence" value="ECO:0007669"/>
    <property type="project" value="InterPro"/>
</dbReference>
<dbReference type="GO" id="GO:0006412">
    <property type="term" value="P:translation"/>
    <property type="evidence" value="ECO:0007669"/>
    <property type="project" value="UniProtKB-UniRule"/>
</dbReference>
<dbReference type="CDD" id="cd00337">
    <property type="entry name" value="Ribosomal_uL14"/>
    <property type="match status" value="1"/>
</dbReference>
<dbReference type="FunFam" id="2.40.150.20:FF:000001">
    <property type="entry name" value="50S ribosomal protein L14"/>
    <property type="match status" value="1"/>
</dbReference>
<dbReference type="Gene3D" id="2.40.150.20">
    <property type="entry name" value="Ribosomal protein L14"/>
    <property type="match status" value="1"/>
</dbReference>
<dbReference type="HAMAP" id="MF_01367">
    <property type="entry name" value="Ribosomal_uL14"/>
    <property type="match status" value="1"/>
</dbReference>
<dbReference type="InterPro" id="IPR000218">
    <property type="entry name" value="Ribosomal_uL14"/>
</dbReference>
<dbReference type="InterPro" id="IPR005745">
    <property type="entry name" value="Ribosomal_uL14_bac-type"/>
</dbReference>
<dbReference type="InterPro" id="IPR019972">
    <property type="entry name" value="Ribosomal_uL14_CS"/>
</dbReference>
<dbReference type="InterPro" id="IPR036853">
    <property type="entry name" value="Ribosomal_uL14_sf"/>
</dbReference>
<dbReference type="NCBIfam" id="TIGR01067">
    <property type="entry name" value="rplN_bact"/>
    <property type="match status" value="1"/>
</dbReference>
<dbReference type="PANTHER" id="PTHR11761">
    <property type="entry name" value="50S/60S RIBOSOMAL PROTEIN L14/L23"/>
    <property type="match status" value="1"/>
</dbReference>
<dbReference type="PANTHER" id="PTHR11761:SF3">
    <property type="entry name" value="LARGE RIBOSOMAL SUBUNIT PROTEIN UL14M"/>
    <property type="match status" value="1"/>
</dbReference>
<dbReference type="Pfam" id="PF00238">
    <property type="entry name" value="Ribosomal_L14"/>
    <property type="match status" value="1"/>
</dbReference>
<dbReference type="SMART" id="SM01374">
    <property type="entry name" value="Ribosomal_L14"/>
    <property type="match status" value="1"/>
</dbReference>
<dbReference type="SUPFAM" id="SSF50193">
    <property type="entry name" value="Ribosomal protein L14"/>
    <property type="match status" value="1"/>
</dbReference>
<dbReference type="PROSITE" id="PS00049">
    <property type="entry name" value="RIBOSOMAL_L14"/>
    <property type="match status" value="1"/>
</dbReference>
<gene>
    <name evidence="1" type="primary">rplN</name>
    <name type="ordered locus">YpAngola_A0593</name>
</gene>
<reference key="1">
    <citation type="journal article" date="2010" name="J. Bacteriol.">
        <title>Genome sequence of the deep-rooted Yersinia pestis strain Angola reveals new insights into the evolution and pangenome of the plague bacterium.</title>
        <authorList>
            <person name="Eppinger M."/>
            <person name="Worsham P.L."/>
            <person name="Nikolich M.P."/>
            <person name="Riley D.R."/>
            <person name="Sebastian Y."/>
            <person name="Mou S."/>
            <person name="Achtman M."/>
            <person name="Lindler L.E."/>
            <person name="Ravel J."/>
        </authorList>
    </citation>
    <scope>NUCLEOTIDE SEQUENCE [LARGE SCALE GENOMIC DNA]</scope>
    <source>
        <strain>Angola</strain>
    </source>
</reference>
<organism>
    <name type="scientific">Yersinia pestis bv. Antiqua (strain Angola)</name>
    <dbReference type="NCBI Taxonomy" id="349746"/>
    <lineage>
        <taxon>Bacteria</taxon>
        <taxon>Pseudomonadati</taxon>
        <taxon>Pseudomonadota</taxon>
        <taxon>Gammaproteobacteria</taxon>
        <taxon>Enterobacterales</taxon>
        <taxon>Yersiniaceae</taxon>
        <taxon>Yersinia</taxon>
    </lineage>
</organism>
<feature type="chain" id="PRO_1000144355" description="Large ribosomal subunit protein uL14">
    <location>
        <begin position="1"/>
        <end position="123"/>
    </location>
</feature>
<protein>
    <recommendedName>
        <fullName evidence="1">Large ribosomal subunit protein uL14</fullName>
    </recommendedName>
    <alternativeName>
        <fullName evidence="2">50S ribosomal protein L14</fullName>
    </alternativeName>
</protein>
<sequence length="123" mass="13582">MIQEQTMLNVADNSGARRVMCIKVLGGSHRRYAGIGDIIKITIKEAIPRGKVKKGDVLKAVVVRTKKGVRRPDGSVIRFDGNACVILNNNSEQPIGTRIFGPVTRELRNEKFMKIISLAPEVL</sequence>
<name>RL14_YERPG</name>
<accession>A9R905</accession>
<evidence type="ECO:0000255" key="1">
    <source>
        <dbReference type="HAMAP-Rule" id="MF_01367"/>
    </source>
</evidence>
<evidence type="ECO:0000305" key="2"/>